<proteinExistence type="inferred from homology"/>
<accession>Q5QWH3</accession>
<comment type="function">
    <text evidence="1">Bifunctional enzyme with both catalase and broad-spectrum peroxidase activity.</text>
</comment>
<comment type="catalytic activity">
    <reaction evidence="1">
        <text>H2O2 + AH2 = A + 2 H2O</text>
        <dbReference type="Rhea" id="RHEA:30275"/>
        <dbReference type="ChEBI" id="CHEBI:13193"/>
        <dbReference type="ChEBI" id="CHEBI:15377"/>
        <dbReference type="ChEBI" id="CHEBI:16240"/>
        <dbReference type="ChEBI" id="CHEBI:17499"/>
        <dbReference type="EC" id="1.11.1.21"/>
    </reaction>
</comment>
<comment type="catalytic activity">
    <reaction evidence="1">
        <text>2 H2O2 = O2 + 2 H2O</text>
        <dbReference type="Rhea" id="RHEA:20309"/>
        <dbReference type="ChEBI" id="CHEBI:15377"/>
        <dbReference type="ChEBI" id="CHEBI:15379"/>
        <dbReference type="ChEBI" id="CHEBI:16240"/>
        <dbReference type="EC" id="1.11.1.21"/>
    </reaction>
</comment>
<comment type="cofactor">
    <cofactor evidence="1">
        <name>heme b</name>
        <dbReference type="ChEBI" id="CHEBI:60344"/>
    </cofactor>
    <text evidence="1">Binds 1 heme b (iron(II)-protoporphyrin IX) group per dimer.</text>
</comment>
<comment type="subunit">
    <text evidence="1">Homodimer or homotetramer.</text>
</comment>
<comment type="PTM">
    <text evidence="1">Formation of the three residue Trp-Tyr-Met cross-link is important for the catalase, but not the peroxidase activity of the enzyme.</text>
</comment>
<comment type="similarity">
    <text evidence="1">Belongs to the peroxidase family. Peroxidase/catalase subfamily.</text>
</comment>
<keyword id="KW-0349">Heme</keyword>
<keyword id="KW-0376">Hydrogen peroxide</keyword>
<keyword id="KW-0408">Iron</keyword>
<keyword id="KW-0479">Metal-binding</keyword>
<keyword id="KW-0560">Oxidoreductase</keyword>
<keyword id="KW-0575">Peroxidase</keyword>
<keyword id="KW-1185">Reference proteome</keyword>
<keyword id="KW-0732">Signal</keyword>
<feature type="signal peptide" evidence="1">
    <location>
        <begin position="1"/>
        <end position="27"/>
    </location>
</feature>
<feature type="chain" id="PRO_0000354811" description="Catalase-peroxidase 2">
    <location>
        <begin position="28"/>
        <end position="751"/>
    </location>
</feature>
<feature type="active site" description="Proton acceptor" evidence="1">
    <location>
        <position position="116"/>
    </location>
</feature>
<feature type="binding site" description="axial binding residue" evidence="1">
    <location>
        <position position="279"/>
    </location>
    <ligand>
        <name>heme b</name>
        <dbReference type="ChEBI" id="CHEBI:60344"/>
    </ligand>
    <ligandPart>
        <name>Fe</name>
        <dbReference type="ChEBI" id="CHEBI:18248"/>
    </ligandPart>
</feature>
<feature type="site" description="Transition state stabilizer" evidence="1">
    <location>
        <position position="112"/>
    </location>
</feature>
<feature type="cross-link" description="Tryptophyl-tyrosyl-methioninium (Trp-Tyr) (with M-264)" evidence="1">
    <location>
        <begin position="115"/>
        <end position="238"/>
    </location>
</feature>
<feature type="cross-link" description="Tryptophyl-tyrosyl-methioninium (Tyr-Met) (with W-115)" evidence="1">
    <location>
        <begin position="238"/>
        <end position="264"/>
    </location>
</feature>
<reference key="1">
    <citation type="journal article" date="2004" name="Proc. Natl. Acad. Sci. U.S.A.">
        <title>Genome sequence of the deep-sea gamma-proteobacterium Idiomarina loihiensis reveals amino acid fermentation as a source of carbon and energy.</title>
        <authorList>
            <person name="Hou S."/>
            <person name="Saw J.H."/>
            <person name="Lee K.S."/>
            <person name="Freitas T.A."/>
            <person name="Belisle C."/>
            <person name="Kawarabayasi Y."/>
            <person name="Donachie S.P."/>
            <person name="Pikina A."/>
            <person name="Galperin M.Y."/>
            <person name="Koonin E.V."/>
            <person name="Makarova K.S."/>
            <person name="Omelchenko M.V."/>
            <person name="Sorokin A."/>
            <person name="Wolf Y.I."/>
            <person name="Li Q.X."/>
            <person name="Keum Y.S."/>
            <person name="Campbell S."/>
            <person name="Denery J."/>
            <person name="Aizawa S."/>
            <person name="Shibata S."/>
            <person name="Malahoff A."/>
            <person name="Alam M."/>
        </authorList>
    </citation>
    <scope>NUCLEOTIDE SEQUENCE [LARGE SCALE GENOMIC DNA]</scope>
    <source>
        <strain>ATCC BAA-735 / DSM 15497 / L2-TR</strain>
    </source>
</reference>
<name>KATG2_IDILO</name>
<protein>
    <recommendedName>
        <fullName evidence="1">Catalase-peroxidase 2</fullName>
        <shortName evidence="1">CP 2</shortName>
        <ecNumber evidence="1">1.11.1.21</ecNumber>
    </recommendedName>
    <alternativeName>
        <fullName evidence="1">Peroxidase/catalase 2</fullName>
    </alternativeName>
</protein>
<sequence>MFKKTVPLLSAVAIAISFSAGTGVANAQENASYEVNSPEPKSNDFWWPNKLNLEPLRQHSPESDPYGDDFDYAEAFSQLDLEQVKKDIEELMTSDQDWWPADYGHYGPFFIRMAWHGAGTYRVQDGRGGAAGAQQRFEPLNSWPDNVSLDKARRLLWPVKQKYGRDISWADLMVLTGNVALESMGFETFGFAGGREDAWEPDIVYWGPEKEWLKGDERYSGDRELENPLAAVQMGLIYVNPEGPNGKPDPLLAAKDIRDTFGRMAMNDEETVALIAGGHTFGKAHGAHKPEECLGAEPAAAGVEEQGLGWKNKCGKGNAEDTITSGLEGAWSVNPTAWTTQYLDNLFGFEWEQTKSPAGAIQWIPVDGQASNLVPDAHVEGKRHAPIMFTTDLSLKEDPEYRKIAKRFHEDPKEFELAFAKAWFKLTHRDMGPKQSYLGDMAPQEDLLWQDPIPAVDFELINENDVEQLKVAILDSGLSVPQLVRTAWASASSFRGTDMRGGANGARIALEPQMNWEANNPAELKKVLDTLKGVQEDFNDELSGDKYVSLADVIVLGGAAAIEKAGKDAGYDVTVPFEPGRTDASQEMTDVNSFSFLEPKADAFRNYYAEGNRVSPAQHMVDKADQLTLTVPEMTVLVGGLRSLDANYNDSDHGVFTDQPGTLNNDFFVNLLSMDNEWKKSSDNEAIYEGFDRKTGEQKYTATTVDLIFGSNSELRAVAEVYAMSDADEKFVNDFVQAWTKVMQLDRFDLK</sequence>
<gene>
    <name evidence="1" type="primary">katG2</name>
    <name type="ordered locus">IL1414</name>
</gene>
<dbReference type="EC" id="1.11.1.21" evidence="1"/>
<dbReference type="EMBL" id="AE017340">
    <property type="protein sequence ID" value="AAV82254.1"/>
    <property type="molecule type" value="Genomic_DNA"/>
</dbReference>
<dbReference type="RefSeq" id="WP_011234660.1">
    <property type="nucleotide sequence ID" value="NC_006512.1"/>
</dbReference>
<dbReference type="SMR" id="Q5QWH3"/>
<dbReference type="STRING" id="283942.IL1414"/>
<dbReference type="PeroxiBase" id="2635">
    <property type="entry name" value="IlCP01"/>
</dbReference>
<dbReference type="GeneID" id="41336591"/>
<dbReference type="KEGG" id="ilo:IL1414"/>
<dbReference type="eggNOG" id="COG0376">
    <property type="taxonomic scope" value="Bacteria"/>
</dbReference>
<dbReference type="HOGENOM" id="CLU_025424_2_0_6"/>
<dbReference type="OrthoDB" id="9759743at2"/>
<dbReference type="Proteomes" id="UP000001171">
    <property type="component" value="Chromosome"/>
</dbReference>
<dbReference type="GO" id="GO:0005829">
    <property type="term" value="C:cytosol"/>
    <property type="evidence" value="ECO:0007669"/>
    <property type="project" value="TreeGrafter"/>
</dbReference>
<dbReference type="GO" id="GO:0004096">
    <property type="term" value="F:catalase activity"/>
    <property type="evidence" value="ECO:0007669"/>
    <property type="project" value="UniProtKB-UniRule"/>
</dbReference>
<dbReference type="GO" id="GO:0020037">
    <property type="term" value="F:heme binding"/>
    <property type="evidence" value="ECO:0007669"/>
    <property type="project" value="InterPro"/>
</dbReference>
<dbReference type="GO" id="GO:0046872">
    <property type="term" value="F:metal ion binding"/>
    <property type="evidence" value="ECO:0007669"/>
    <property type="project" value="UniProtKB-KW"/>
</dbReference>
<dbReference type="GO" id="GO:0070301">
    <property type="term" value="P:cellular response to hydrogen peroxide"/>
    <property type="evidence" value="ECO:0007669"/>
    <property type="project" value="TreeGrafter"/>
</dbReference>
<dbReference type="GO" id="GO:0042744">
    <property type="term" value="P:hydrogen peroxide catabolic process"/>
    <property type="evidence" value="ECO:0007669"/>
    <property type="project" value="UniProtKB-KW"/>
</dbReference>
<dbReference type="CDD" id="cd00649">
    <property type="entry name" value="catalase_peroxidase_1"/>
    <property type="match status" value="1"/>
</dbReference>
<dbReference type="CDD" id="cd08200">
    <property type="entry name" value="catalase_peroxidase_2"/>
    <property type="match status" value="1"/>
</dbReference>
<dbReference type="FunFam" id="1.10.420.10:FF:000002">
    <property type="entry name" value="Catalase-peroxidase"/>
    <property type="match status" value="1"/>
</dbReference>
<dbReference type="FunFam" id="1.10.420.10:FF:000004">
    <property type="entry name" value="Catalase-peroxidase"/>
    <property type="match status" value="1"/>
</dbReference>
<dbReference type="FunFam" id="1.10.520.10:FF:000002">
    <property type="entry name" value="Catalase-peroxidase"/>
    <property type="match status" value="1"/>
</dbReference>
<dbReference type="Gene3D" id="1.10.520.10">
    <property type="match status" value="2"/>
</dbReference>
<dbReference type="Gene3D" id="1.10.420.10">
    <property type="entry name" value="Peroxidase, domain 2"/>
    <property type="match status" value="2"/>
</dbReference>
<dbReference type="HAMAP" id="MF_01961">
    <property type="entry name" value="Catal_peroxid"/>
    <property type="match status" value="1"/>
</dbReference>
<dbReference type="InterPro" id="IPR000763">
    <property type="entry name" value="Catalase_peroxidase"/>
</dbReference>
<dbReference type="InterPro" id="IPR002016">
    <property type="entry name" value="Haem_peroxidase"/>
</dbReference>
<dbReference type="InterPro" id="IPR010255">
    <property type="entry name" value="Haem_peroxidase_sf"/>
</dbReference>
<dbReference type="InterPro" id="IPR019794">
    <property type="entry name" value="Peroxidases_AS"/>
</dbReference>
<dbReference type="InterPro" id="IPR019793">
    <property type="entry name" value="Peroxidases_heam-ligand_BS"/>
</dbReference>
<dbReference type="NCBIfam" id="TIGR00198">
    <property type="entry name" value="cat_per_HPI"/>
    <property type="match status" value="1"/>
</dbReference>
<dbReference type="NCBIfam" id="NF011635">
    <property type="entry name" value="PRK15061.1"/>
    <property type="match status" value="1"/>
</dbReference>
<dbReference type="PANTHER" id="PTHR30555:SF0">
    <property type="entry name" value="CATALASE-PEROXIDASE"/>
    <property type="match status" value="1"/>
</dbReference>
<dbReference type="PANTHER" id="PTHR30555">
    <property type="entry name" value="HYDROPEROXIDASE I, BIFUNCTIONAL CATALASE-PEROXIDASE"/>
    <property type="match status" value="1"/>
</dbReference>
<dbReference type="Pfam" id="PF00141">
    <property type="entry name" value="peroxidase"/>
    <property type="match status" value="2"/>
</dbReference>
<dbReference type="PRINTS" id="PR00460">
    <property type="entry name" value="BPEROXIDASE"/>
</dbReference>
<dbReference type="PRINTS" id="PR00458">
    <property type="entry name" value="PEROXIDASE"/>
</dbReference>
<dbReference type="SUPFAM" id="SSF48113">
    <property type="entry name" value="Heme-dependent peroxidases"/>
    <property type="match status" value="2"/>
</dbReference>
<dbReference type="PROSITE" id="PS00435">
    <property type="entry name" value="PEROXIDASE_1"/>
    <property type="match status" value="1"/>
</dbReference>
<dbReference type="PROSITE" id="PS00436">
    <property type="entry name" value="PEROXIDASE_2"/>
    <property type="match status" value="1"/>
</dbReference>
<dbReference type="PROSITE" id="PS50873">
    <property type="entry name" value="PEROXIDASE_4"/>
    <property type="match status" value="1"/>
</dbReference>
<organism>
    <name type="scientific">Idiomarina loihiensis (strain ATCC BAA-735 / DSM 15497 / L2-TR)</name>
    <dbReference type="NCBI Taxonomy" id="283942"/>
    <lineage>
        <taxon>Bacteria</taxon>
        <taxon>Pseudomonadati</taxon>
        <taxon>Pseudomonadota</taxon>
        <taxon>Gammaproteobacteria</taxon>
        <taxon>Alteromonadales</taxon>
        <taxon>Idiomarinaceae</taxon>
        <taxon>Idiomarina</taxon>
    </lineage>
</organism>
<evidence type="ECO:0000255" key="1">
    <source>
        <dbReference type="HAMAP-Rule" id="MF_01961"/>
    </source>
</evidence>